<organism evidence="3">
    <name type="scientific">Sus scrofa</name>
    <name type="common">Pig</name>
    <dbReference type="NCBI Taxonomy" id="9823"/>
    <lineage>
        <taxon>Eukaryota</taxon>
        <taxon>Metazoa</taxon>
        <taxon>Chordata</taxon>
        <taxon>Craniata</taxon>
        <taxon>Vertebrata</taxon>
        <taxon>Euteleostomi</taxon>
        <taxon>Mammalia</taxon>
        <taxon>Eutheria</taxon>
        <taxon>Laurasiatheria</taxon>
        <taxon>Artiodactyla</taxon>
        <taxon>Suina</taxon>
        <taxon>Suidae</taxon>
        <taxon>Sus</taxon>
    </lineage>
</organism>
<accession>P83662</accession>
<keyword id="KW-0210">Decarboxylase</keyword>
<keyword id="KW-0903">Direct protein sequencing</keyword>
<keyword id="KW-0456">Lyase</keyword>
<keyword id="KW-0479">Metal-binding</keyword>
<keyword id="KW-1185">Reference proteome</keyword>
<keyword id="KW-0862">Zinc</keyword>
<evidence type="ECO:0000250" key="1"/>
<evidence type="ECO:0000269" key="2">
    <source>
    </source>
</evidence>
<evidence type="ECO:0000305" key="3"/>
<sequence length="138" mass="15679">MKIDIHSHILPKEWPDLKKRFGYXGWVELQHHSEGEAKMLKDGKVFRVVQERFVGLGTLPMQAPXSLFVHPWDMQYWFPWLIGMPAETTTAXESMMMGGVFEKVXFAHGGGSFPFTVGRIVILGTDYPFPLGELEPGK</sequence>
<comment type="function">
    <text>Converts alpha-amino-beta-carboxymuconate-epsilon-semialdehyde (ACMS) to alpha-aminomuconate semialdehyde (AMS). ACMS can be converted non-enzymatically to quinolate (QA), a key precursor of NAD, and a potent endogenous excitotoxin of neuronal cells which is implicated in the pathogenesis of various neurodegenerative disorders. In the presence of ACMSD, ACMS is converted to AMS, a benign catabolite. ACMSD ultimately controls the metabolic fate of tryptophan catabolism along the kynurenine pathway.</text>
</comment>
<comment type="catalytic activity">
    <reaction>
        <text>2-amino-3-carboxymuconate 6-semialdehyde + H(+) = 2-aminomuconate 6-semialdehyde + CO2</text>
        <dbReference type="Rhea" id="RHEA:16557"/>
        <dbReference type="ChEBI" id="CHEBI:15378"/>
        <dbReference type="ChEBI" id="CHEBI:16526"/>
        <dbReference type="ChEBI" id="CHEBI:77634"/>
        <dbReference type="ChEBI" id="CHEBI:77803"/>
        <dbReference type="EC" id="4.1.1.45"/>
    </reaction>
</comment>
<comment type="pathway">
    <text>Secondary metabolite metabolism; quinolate metabolism.</text>
</comment>
<comment type="subunit">
    <text evidence="1">Monomer.</text>
</comment>
<comment type="similarity">
    <text evidence="3">Belongs to the metallo-dependent hydrolases superfamily. ACMSD family.</text>
</comment>
<protein>
    <recommendedName>
        <fullName>2-amino-3-carboxymuconate-6-semialdehyde decarboxylase</fullName>
        <ecNumber>4.1.1.45</ecNumber>
    </recommendedName>
    <alternativeName>
        <fullName>Picolinate carboxylase</fullName>
    </alternativeName>
</protein>
<dbReference type="EC" id="4.1.1.45"/>
<dbReference type="InParanoid" id="P83662"/>
<dbReference type="UniPathway" id="UPA00270"/>
<dbReference type="Proteomes" id="UP000008227">
    <property type="component" value="Unplaced"/>
</dbReference>
<dbReference type="Proteomes" id="UP000314985">
    <property type="component" value="Unplaced"/>
</dbReference>
<dbReference type="Proteomes" id="UP000694570">
    <property type="component" value="Unplaced"/>
</dbReference>
<dbReference type="Proteomes" id="UP000694571">
    <property type="component" value="Unplaced"/>
</dbReference>
<dbReference type="Proteomes" id="UP000694720">
    <property type="component" value="Unplaced"/>
</dbReference>
<dbReference type="Proteomes" id="UP000694722">
    <property type="component" value="Unplaced"/>
</dbReference>
<dbReference type="Proteomes" id="UP000694723">
    <property type="component" value="Unplaced"/>
</dbReference>
<dbReference type="Proteomes" id="UP000694724">
    <property type="component" value="Unplaced"/>
</dbReference>
<dbReference type="Proteomes" id="UP000694725">
    <property type="component" value="Unplaced"/>
</dbReference>
<dbReference type="Proteomes" id="UP000694726">
    <property type="component" value="Unplaced"/>
</dbReference>
<dbReference type="Proteomes" id="UP000694727">
    <property type="component" value="Unplaced"/>
</dbReference>
<dbReference type="Proteomes" id="UP000694728">
    <property type="component" value="Unplaced"/>
</dbReference>
<dbReference type="GO" id="GO:0005829">
    <property type="term" value="C:cytosol"/>
    <property type="evidence" value="ECO:0000250"/>
    <property type="project" value="UniProtKB"/>
</dbReference>
<dbReference type="GO" id="GO:0001760">
    <property type="term" value="F:aminocarboxymuconate-semialdehyde decarboxylase activity"/>
    <property type="evidence" value="ECO:0000250"/>
    <property type="project" value="UniProtKB"/>
</dbReference>
<dbReference type="GO" id="GO:0046872">
    <property type="term" value="F:metal ion binding"/>
    <property type="evidence" value="ECO:0007669"/>
    <property type="project" value="UniProtKB-KW"/>
</dbReference>
<dbReference type="GO" id="GO:1904985">
    <property type="term" value="P:negative regulation of quinolinate biosynthetic process"/>
    <property type="evidence" value="ECO:0000250"/>
    <property type="project" value="UniProtKB"/>
</dbReference>
<dbReference type="Gene3D" id="3.20.20.140">
    <property type="entry name" value="Metal-dependent hydrolases"/>
    <property type="match status" value="2"/>
</dbReference>
<dbReference type="InterPro" id="IPR032465">
    <property type="entry name" value="ACMSD"/>
</dbReference>
<dbReference type="InterPro" id="IPR032466">
    <property type="entry name" value="Metal_Hydrolase"/>
</dbReference>
<dbReference type="PANTHER" id="PTHR21240">
    <property type="entry name" value="2-AMINO-3-CARBOXYLMUCONATE-6-SEMIALDEHYDE DECARBOXYLASE"/>
    <property type="match status" value="1"/>
</dbReference>
<dbReference type="PANTHER" id="PTHR21240:SF27">
    <property type="entry name" value="2-AMINO-3-CARBOXYMUCONATE-6-SEMIALDEHYDE DECARBOXYLASE"/>
    <property type="match status" value="1"/>
</dbReference>
<dbReference type="SUPFAM" id="SSF51556">
    <property type="entry name" value="Metallo-dependent hydrolases"/>
    <property type="match status" value="1"/>
</dbReference>
<feature type="chain" id="PRO_0000190981" description="2-amino-3-carboxymuconate-6-semialdehyde decarboxylase">
    <location>
        <begin position="1"/>
        <end position="138" status="greater than"/>
    </location>
</feature>
<feature type="binding site" evidence="1">
    <location>
        <position position="6"/>
    </location>
    <ligand>
        <name>Zn(2+)</name>
        <dbReference type="ChEBI" id="CHEBI:29105"/>
    </ligand>
</feature>
<feature type="binding site" evidence="1">
    <location>
        <position position="8"/>
    </location>
    <ligand>
        <name>Zn(2+)</name>
        <dbReference type="ChEBI" id="CHEBI:29105"/>
    </ligand>
</feature>
<feature type="binding site" evidence="1">
    <location>
        <position position="47"/>
    </location>
    <ligand>
        <name>substrate</name>
    </ligand>
</feature>
<feature type="binding site" evidence="1">
    <location>
        <position position="70"/>
    </location>
    <ligand>
        <name>Zn(2+)</name>
        <dbReference type="ChEBI" id="CHEBI:29105"/>
    </ligand>
</feature>
<feature type="binding site" evidence="1">
    <location>
        <position position="126"/>
    </location>
    <ligand>
        <name>Zn(2+)</name>
        <dbReference type="ChEBI" id="CHEBI:29105"/>
    </ligand>
</feature>
<feature type="unsure residue" description="Y or G">
    <location>
        <position position="23"/>
    </location>
</feature>
<feature type="unsure residue" description="G or D">
    <location>
        <position position="43"/>
    </location>
</feature>
<feature type="unsure residue" description="V or R">
    <location>
        <position position="48"/>
    </location>
</feature>
<feature type="non-consecutive residues" evidence="3">
    <location>
        <begin position="51"/>
        <end position="52"/>
    </location>
</feature>
<feature type="non-consecutive residues" evidence="3">
    <location>
        <begin position="64"/>
        <end position="65"/>
    </location>
</feature>
<feature type="non-consecutive residues" evidence="3">
    <location>
        <begin position="75"/>
        <end position="76"/>
    </location>
</feature>
<feature type="non-consecutive residues" evidence="3">
    <location>
        <begin position="103"/>
        <end position="104"/>
    </location>
</feature>
<feature type="non-consecutive residues" evidence="3">
    <location>
        <begin position="120"/>
        <end position="121"/>
    </location>
</feature>
<feature type="non-terminal residue" evidence="3">
    <location>
        <position position="138"/>
    </location>
</feature>
<gene>
    <name type="primary">ACMSD</name>
</gene>
<proteinExistence type="evidence at protein level"/>
<reference evidence="3" key="1">
    <citation type="journal article" date="2002" name="J. Biol. Chem.">
        <title>Identification and expression of a cDNA encoding human alpha-amino-beta-carboxymuconate-epsilon-semialdehyde decarboxylase (ACMSD). A key enzyme for the tryptophan-niacine pathway and 'quinolinate hypothesis'.</title>
        <authorList>
            <person name="Fukuoka S."/>
            <person name="Ishiguro K."/>
            <person name="Yanagihara K."/>
            <person name="Tanabe A."/>
            <person name="Egashira Y."/>
            <person name="Sanada H."/>
            <person name="Shibata K."/>
        </authorList>
    </citation>
    <scope>PROTEIN SEQUENCE</scope>
    <source>
        <tissue evidence="2">Brain</tissue>
    </source>
</reference>
<name>ACMSD_PIG</name>